<evidence type="ECO:0000255" key="1">
    <source>
        <dbReference type="HAMAP-Rule" id="MF_01357"/>
    </source>
</evidence>
<reference key="1">
    <citation type="journal article" date="2005" name="PLoS Biol.">
        <title>The Wolbachia genome of Brugia malayi: endosymbiont evolution within a human pathogenic nematode.</title>
        <authorList>
            <person name="Foster J."/>
            <person name="Ganatra M."/>
            <person name="Kamal I."/>
            <person name="Ware J."/>
            <person name="Makarova K."/>
            <person name="Ivanova N."/>
            <person name="Bhattacharyya A."/>
            <person name="Kapatral V."/>
            <person name="Kumar S."/>
            <person name="Posfai J."/>
            <person name="Vincze T."/>
            <person name="Ingram J."/>
            <person name="Moran L."/>
            <person name="Lapidus A."/>
            <person name="Omelchenko M."/>
            <person name="Kyrpides N."/>
            <person name="Ghedin E."/>
            <person name="Wang S."/>
            <person name="Goltsman E."/>
            <person name="Joukov V."/>
            <person name="Ostrovskaya O."/>
            <person name="Tsukerman K."/>
            <person name="Mazur M."/>
            <person name="Comb D."/>
            <person name="Koonin E."/>
            <person name="Slatko B."/>
        </authorList>
    </citation>
    <scope>NUCLEOTIDE SEQUENCE [LARGE SCALE GENOMIC DNA]</scope>
    <source>
        <strain>TRS</strain>
    </source>
</reference>
<proteinExistence type="inferred from homology"/>
<keyword id="KW-1003">Cell membrane</keyword>
<keyword id="KW-0472">Membrane</keyword>
<keyword id="KW-0520">NAD</keyword>
<keyword id="KW-0874">Quinone</keyword>
<keyword id="KW-1185">Reference proteome</keyword>
<keyword id="KW-1278">Translocase</keyword>
<keyword id="KW-0813">Transport</keyword>
<keyword id="KW-0830">Ubiquinone</keyword>
<comment type="function">
    <text evidence="1">NDH-1 shuttles electrons from NADH, via FMN and iron-sulfur (Fe-S) centers, to quinones in the respiratory chain. The immediate electron acceptor for the enzyme in this species is believed to be ubiquinone. Couples the redox reaction to proton translocation (for every two electrons transferred, four hydrogen ions are translocated across the cytoplasmic membrane), and thus conserves the redox energy in a proton gradient.</text>
</comment>
<comment type="catalytic activity">
    <reaction evidence="1">
        <text>a quinone + NADH + 5 H(+)(in) = a quinol + NAD(+) + 4 H(+)(out)</text>
        <dbReference type="Rhea" id="RHEA:57888"/>
        <dbReference type="ChEBI" id="CHEBI:15378"/>
        <dbReference type="ChEBI" id="CHEBI:24646"/>
        <dbReference type="ChEBI" id="CHEBI:57540"/>
        <dbReference type="ChEBI" id="CHEBI:57945"/>
        <dbReference type="ChEBI" id="CHEBI:132124"/>
    </reaction>
</comment>
<comment type="subunit">
    <text evidence="1">NDH-1 is composed of 14 different subunits. Subunits NuoB, C, D, E, F, and G constitute the peripheral sector of the complex.</text>
</comment>
<comment type="subcellular location">
    <subcellularLocation>
        <location evidence="1">Cell membrane</location>
        <topology evidence="1">Peripheral membrane protein</topology>
        <orientation evidence="1">Cytoplasmic side</orientation>
    </subcellularLocation>
</comment>
<comment type="similarity">
    <text evidence="1">Belongs to the complex I 30 kDa subunit family.</text>
</comment>
<organism>
    <name type="scientific">Wolbachia sp. subsp. Brugia malayi (strain TRS)</name>
    <dbReference type="NCBI Taxonomy" id="292805"/>
    <lineage>
        <taxon>Bacteria</taxon>
        <taxon>Pseudomonadati</taxon>
        <taxon>Pseudomonadota</taxon>
        <taxon>Alphaproteobacteria</taxon>
        <taxon>Rickettsiales</taxon>
        <taxon>Anaplasmataceae</taxon>
        <taxon>Wolbachieae</taxon>
        <taxon>Wolbachia</taxon>
    </lineage>
</organism>
<gene>
    <name evidence="1" type="primary">nuoC</name>
    <name type="ordered locus">Wbm0243</name>
</gene>
<name>NUOC_WOLTR</name>
<sequence>MDKTAKYIQKKTKCEFIQQGDGTIVIYSTLDNIEDHLLFLRDDEKCRFELLVDIFGVDYPDREKRFELIYNLLSIVHNIRVHIKLQLYEDDMPPSVVRIFNTASWFEREVFDMYGIEFSNHPDLRRILTDYGFKGHPMLKDFPLTGYEEVRYDIEAKKVVYNPIDLPQDFRMFDSLSPWEGETAKANTKE</sequence>
<dbReference type="EC" id="7.1.1.-" evidence="1"/>
<dbReference type="EMBL" id="AE017321">
    <property type="protein sequence ID" value="AAW70832.1"/>
    <property type="molecule type" value="Genomic_DNA"/>
</dbReference>
<dbReference type="RefSeq" id="WP_011256442.1">
    <property type="nucleotide sequence ID" value="NC_006833.1"/>
</dbReference>
<dbReference type="SMR" id="Q5GT42"/>
<dbReference type="STRING" id="292805.Wbm0243"/>
<dbReference type="KEGG" id="wbm:Wbm0243"/>
<dbReference type="eggNOG" id="COG0852">
    <property type="taxonomic scope" value="Bacteria"/>
</dbReference>
<dbReference type="HOGENOM" id="CLU_042628_2_1_5"/>
<dbReference type="Proteomes" id="UP000000534">
    <property type="component" value="Chromosome"/>
</dbReference>
<dbReference type="GO" id="GO:0005886">
    <property type="term" value="C:plasma membrane"/>
    <property type="evidence" value="ECO:0007669"/>
    <property type="project" value="UniProtKB-SubCell"/>
</dbReference>
<dbReference type="GO" id="GO:0008137">
    <property type="term" value="F:NADH dehydrogenase (ubiquinone) activity"/>
    <property type="evidence" value="ECO:0007669"/>
    <property type="project" value="InterPro"/>
</dbReference>
<dbReference type="GO" id="GO:0050136">
    <property type="term" value="F:NADH:ubiquinone reductase (non-electrogenic) activity"/>
    <property type="evidence" value="ECO:0007669"/>
    <property type="project" value="UniProtKB-UniRule"/>
</dbReference>
<dbReference type="GO" id="GO:0048038">
    <property type="term" value="F:quinone binding"/>
    <property type="evidence" value="ECO:0007669"/>
    <property type="project" value="UniProtKB-KW"/>
</dbReference>
<dbReference type="Gene3D" id="3.30.460.80">
    <property type="entry name" value="NADH:ubiquinone oxidoreductase, 30kDa subunit"/>
    <property type="match status" value="1"/>
</dbReference>
<dbReference type="HAMAP" id="MF_01357">
    <property type="entry name" value="NDH1_NuoC"/>
    <property type="match status" value="1"/>
</dbReference>
<dbReference type="InterPro" id="IPR010218">
    <property type="entry name" value="NADH_DH_suC"/>
</dbReference>
<dbReference type="InterPro" id="IPR037232">
    <property type="entry name" value="NADH_quin_OxRdtase_su_C/D-like"/>
</dbReference>
<dbReference type="InterPro" id="IPR001268">
    <property type="entry name" value="NADH_UbQ_OxRdtase_30kDa_su"/>
</dbReference>
<dbReference type="InterPro" id="IPR020396">
    <property type="entry name" value="NADH_UbQ_OxRdtase_CS"/>
</dbReference>
<dbReference type="NCBIfam" id="TIGR01961">
    <property type="entry name" value="NuoC_fam"/>
    <property type="match status" value="1"/>
</dbReference>
<dbReference type="NCBIfam" id="NF004733">
    <property type="entry name" value="PRK06074.1-5"/>
    <property type="match status" value="1"/>
</dbReference>
<dbReference type="PANTHER" id="PTHR10884:SF14">
    <property type="entry name" value="NADH DEHYDROGENASE [UBIQUINONE] IRON-SULFUR PROTEIN 3, MITOCHONDRIAL"/>
    <property type="match status" value="1"/>
</dbReference>
<dbReference type="PANTHER" id="PTHR10884">
    <property type="entry name" value="NADH DEHYDROGENASE UBIQUINONE IRON-SULFUR PROTEIN 3"/>
    <property type="match status" value="1"/>
</dbReference>
<dbReference type="Pfam" id="PF00329">
    <property type="entry name" value="Complex1_30kDa"/>
    <property type="match status" value="1"/>
</dbReference>
<dbReference type="SUPFAM" id="SSF143243">
    <property type="entry name" value="Nqo5-like"/>
    <property type="match status" value="1"/>
</dbReference>
<dbReference type="PROSITE" id="PS00542">
    <property type="entry name" value="COMPLEX1_30K"/>
    <property type="match status" value="1"/>
</dbReference>
<accession>Q5GT42</accession>
<protein>
    <recommendedName>
        <fullName evidence="1">NADH-quinone oxidoreductase subunit C</fullName>
        <ecNumber evidence="1">7.1.1.-</ecNumber>
    </recommendedName>
    <alternativeName>
        <fullName evidence="1">NADH dehydrogenase I subunit C</fullName>
    </alternativeName>
    <alternativeName>
        <fullName evidence="1">NDH-1 subunit C</fullName>
    </alternativeName>
</protein>
<feature type="chain" id="PRO_0000358221" description="NADH-quinone oxidoreductase subunit C">
    <location>
        <begin position="1"/>
        <end position="190"/>
    </location>
</feature>